<reference key="1">
    <citation type="journal article" date="2002" name="Nature">
        <title>The genome sequence of Schizosaccharomyces pombe.</title>
        <authorList>
            <person name="Wood V."/>
            <person name="Gwilliam R."/>
            <person name="Rajandream M.A."/>
            <person name="Lyne M.H."/>
            <person name="Lyne R."/>
            <person name="Stewart A."/>
            <person name="Sgouros J.G."/>
            <person name="Peat N."/>
            <person name="Hayles J."/>
            <person name="Baker S.G."/>
            <person name="Basham D."/>
            <person name="Bowman S."/>
            <person name="Brooks K."/>
            <person name="Brown D."/>
            <person name="Brown S."/>
            <person name="Chillingworth T."/>
            <person name="Churcher C.M."/>
            <person name="Collins M."/>
            <person name="Connor R."/>
            <person name="Cronin A."/>
            <person name="Davis P."/>
            <person name="Feltwell T."/>
            <person name="Fraser A."/>
            <person name="Gentles S."/>
            <person name="Goble A."/>
            <person name="Hamlin N."/>
            <person name="Harris D.E."/>
            <person name="Hidalgo J."/>
            <person name="Hodgson G."/>
            <person name="Holroyd S."/>
            <person name="Hornsby T."/>
            <person name="Howarth S."/>
            <person name="Huckle E.J."/>
            <person name="Hunt S."/>
            <person name="Jagels K."/>
            <person name="James K.D."/>
            <person name="Jones L."/>
            <person name="Jones M."/>
            <person name="Leather S."/>
            <person name="McDonald S."/>
            <person name="McLean J."/>
            <person name="Mooney P."/>
            <person name="Moule S."/>
            <person name="Mungall K.L."/>
            <person name="Murphy L.D."/>
            <person name="Niblett D."/>
            <person name="Odell C."/>
            <person name="Oliver K."/>
            <person name="O'Neil S."/>
            <person name="Pearson D."/>
            <person name="Quail M.A."/>
            <person name="Rabbinowitsch E."/>
            <person name="Rutherford K.M."/>
            <person name="Rutter S."/>
            <person name="Saunders D."/>
            <person name="Seeger K."/>
            <person name="Sharp S."/>
            <person name="Skelton J."/>
            <person name="Simmonds M.N."/>
            <person name="Squares R."/>
            <person name="Squares S."/>
            <person name="Stevens K."/>
            <person name="Taylor K."/>
            <person name="Taylor R.G."/>
            <person name="Tivey A."/>
            <person name="Walsh S.V."/>
            <person name="Warren T."/>
            <person name="Whitehead S."/>
            <person name="Woodward J.R."/>
            <person name="Volckaert G."/>
            <person name="Aert R."/>
            <person name="Robben J."/>
            <person name="Grymonprez B."/>
            <person name="Weltjens I."/>
            <person name="Vanstreels E."/>
            <person name="Rieger M."/>
            <person name="Schaefer M."/>
            <person name="Mueller-Auer S."/>
            <person name="Gabel C."/>
            <person name="Fuchs M."/>
            <person name="Duesterhoeft A."/>
            <person name="Fritzc C."/>
            <person name="Holzer E."/>
            <person name="Moestl D."/>
            <person name="Hilbert H."/>
            <person name="Borzym K."/>
            <person name="Langer I."/>
            <person name="Beck A."/>
            <person name="Lehrach H."/>
            <person name="Reinhardt R."/>
            <person name="Pohl T.M."/>
            <person name="Eger P."/>
            <person name="Zimmermann W."/>
            <person name="Wedler H."/>
            <person name="Wambutt R."/>
            <person name="Purnelle B."/>
            <person name="Goffeau A."/>
            <person name="Cadieu E."/>
            <person name="Dreano S."/>
            <person name="Gloux S."/>
            <person name="Lelaure V."/>
            <person name="Mottier S."/>
            <person name="Galibert F."/>
            <person name="Aves S.J."/>
            <person name="Xiang Z."/>
            <person name="Hunt C."/>
            <person name="Moore K."/>
            <person name="Hurst S.M."/>
            <person name="Lucas M."/>
            <person name="Rochet M."/>
            <person name="Gaillardin C."/>
            <person name="Tallada V.A."/>
            <person name="Garzon A."/>
            <person name="Thode G."/>
            <person name="Daga R.R."/>
            <person name="Cruzado L."/>
            <person name="Jimenez J."/>
            <person name="Sanchez M."/>
            <person name="del Rey F."/>
            <person name="Benito J."/>
            <person name="Dominguez A."/>
            <person name="Revuelta J.L."/>
            <person name="Moreno S."/>
            <person name="Armstrong J."/>
            <person name="Forsburg S.L."/>
            <person name="Cerutti L."/>
            <person name="Lowe T."/>
            <person name="McCombie W.R."/>
            <person name="Paulsen I."/>
            <person name="Potashkin J."/>
            <person name="Shpakovski G.V."/>
            <person name="Ussery D."/>
            <person name="Barrell B.G."/>
            <person name="Nurse P."/>
        </authorList>
    </citation>
    <scope>NUCLEOTIDE SEQUENCE [LARGE SCALE GENOMIC DNA]</scope>
    <source>
        <strain>972 / ATCC 24843</strain>
    </source>
</reference>
<reference key="2">
    <citation type="journal article" date="2005" name="Curr. Biol.">
        <title>Novel genes required for meiotic chromosome segregation are identified by a high-throughput knockout screen in fission yeast.</title>
        <authorList>
            <person name="Gregan J."/>
            <person name="Rabitsch P.K."/>
            <person name="Sakem B."/>
            <person name="Csutak O."/>
            <person name="Latypov V."/>
            <person name="Lehmann E."/>
            <person name="Kohli J."/>
            <person name="Nasmyth K."/>
        </authorList>
    </citation>
    <scope>FUNCTION</scope>
</reference>
<reference key="3">
    <citation type="journal article" date="2006" name="Nat. Biotechnol.">
        <title>ORFeome cloning and global analysis of protein localization in the fission yeast Schizosaccharomyces pombe.</title>
        <authorList>
            <person name="Matsuyama A."/>
            <person name="Arai R."/>
            <person name="Yashiroda Y."/>
            <person name="Shirai A."/>
            <person name="Kamata A."/>
            <person name="Sekido S."/>
            <person name="Kobayashi Y."/>
            <person name="Hashimoto A."/>
            <person name="Hamamoto M."/>
            <person name="Hiraoka Y."/>
            <person name="Horinouchi S."/>
            <person name="Yoshida M."/>
        </authorList>
    </citation>
    <scope>SUBCELLULAR LOCATION [LARGE SCALE ANALYSIS]</scope>
</reference>
<sequence>MNQDDFRKLLATPKAETSQLKNFSSNKSQRLVFGRKHKTAKLEAPRALIKRKQLSHSTSSDITRHSNAKNSGKDTQFYEEPSSKQDIELHKLHEKLRNGQITTKEYSEKSKELGGDLNTTHLVRGLDRKLLEKVRSNELALDDSLLSSSEKEVDEEADKLLEKVAEESSHPESVSILEEKKKIPLYPNGQPKYRKILENGKKVKYLLDENGEILKRLVKKEKKLKNDNERLENEHRTEKLNVNANSLGKSFVKHDIPLPPVDLKLDIFEEVGEYDPFHENDKEPAELKAKDAFQLKGHHELDAPYHKKVFDTNQYSDLKPTNFMSQIHRLAKVQERKEEEERKKGKDGQIVDAGFGLVLSKDDTADIHELGESDDDDNVKRRKTKG</sequence>
<evidence type="ECO:0000256" key="1">
    <source>
        <dbReference type="SAM" id="MobiDB-lite"/>
    </source>
</evidence>
<evidence type="ECO:0000269" key="2">
    <source>
    </source>
</evidence>
<evidence type="ECO:0000269" key="3">
    <source>
    </source>
</evidence>
<keyword id="KW-0131">Cell cycle</keyword>
<keyword id="KW-0469">Meiosis</keyword>
<keyword id="KW-0539">Nucleus</keyword>
<keyword id="KW-1185">Reference proteome</keyword>
<proteinExistence type="predicted"/>
<name>YP02_SCHPO</name>
<accession>Q9Y7Z6</accession>
<gene>
    <name type="ORF">SPBC1539.02</name>
</gene>
<organism>
    <name type="scientific">Schizosaccharomyces pombe (strain 972 / ATCC 24843)</name>
    <name type="common">Fission yeast</name>
    <dbReference type="NCBI Taxonomy" id="284812"/>
    <lineage>
        <taxon>Eukaryota</taxon>
        <taxon>Fungi</taxon>
        <taxon>Dikarya</taxon>
        <taxon>Ascomycota</taxon>
        <taxon>Taphrinomycotina</taxon>
        <taxon>Schizosaccharomycetes</taxon>
        <taxon>Schizosaccharomycetales</taxon>
        <taxon>Schizosaccharomycetaceae</taxon>
        <taxon>Schizosaccharomyces</taxon>
    </lineage>
</organism>
<dbReference type="EMBL" id="CU329671">
    <property type="protein sequence ID" value="CAB51334.1"/>
    <property type="molecule type" value="Genomic_DNA"/>
</dbReference>
<dbReference type="PIR" id="T39461">
    <property type="entry name" value="T39461"/>
</dbReference>
<dbReference type="RefSeq" id="NP_596816.1">
    <property type="nucleotide sequence ID" value="NM_001023836.2"/>
</dbReference>
<dbReference type="SMR" id="Q9Y7Z6"/>
<dbReference type="STRING" id="284812.Q9Y7Z6"/>
<dbReference type="iPTMnet" id="Q9Y7Z6"/>
<dbReference type="PaxDb" id="4896-SPBC1539.02.1"/>
<dbReference type="EnsemblFungi" id="SPBC1539.02.1">
    <property type="protein sequence ID" value="SPBC1539.02.1:pep"/>
    <property type="gene ID" value="SPBC1539.02"/>
</dbReference>
<dbReference type="KEGG" id="spo:2539927"/>
<dbReference type="PomBase" id="SPBC1539.02"/>
<dbReference type="VEuPathDB" id="FungiDB:SPBC1539.02"/>
<dbReference type="eggNOG" id="KOG2498">
    <property type="taxonomic scope" value="Eukaryota"/>
</dbReference>
<dbReference type="HOGENOM" id="CLU_735999_0_0_1"/>
<dbReference type="InParanoid" id="Q9Y7Z6"/>
<dbReference type="OMA" id="NHEENTH"/>
<dbReference type="PRO" id="PR:Q9Y7Z6"/>
<dbReference type="Proteomes" id="UP000002485">
    <property type="component" value="Chromosome II"/>
</dbReference>
<dbReference type="GO" id="GO:0005634">
    <property type="term" value="C:nucleus"/>
    <property type="evidence" value="ECO:0007005"/>
    <property type="project" value="PomBase"/>
</dbReference>
<dbReference type="GO" id="GO:0051321">
    <property type="term" value="P:meiotic cell cycle"/>
    <property type="evidence" value="ECO:0007669"/>
    <property type="project" value="UniProtKB-KW"/>
</dbReference>
<dbReference type="InterPro" id="IPR039896">
    <property type="entry name" value="Red-like"/>
</dbReference>
<dbReference type="InterPro" id="IPR012916">
    <property type="entry name" value="RED_N"/>
</dbReference>
<dbReference type="PANTHER" id="PTHR12765">
    <property type="entry name" value="RED PROTEIN IK FACTOR CYTOKINE IK"/>
    <property type="match status" value="1"/>
</dbReference>
<dbReference type="Pfam" id="PF07808">
    <property type="entry name" value="RED_N"/>
    <property type="match status" value="1"/>
</dbReference>
<feature type="chain" id="PRO_0000358936" description="Meiotic chromosome segregation protein C1539.02">
    <location>
        <begin position="1"/>
        <end position="386"/>
    </location>
</feature>
<feature type="region of interest" description="Disordered" evidence="1">
    <location>
        <begin position="1"/>
        <end position="28"/>
    </location>
</feature>
<feature type="region of interest" description="Disordered" evidence="1">
    <location>
        <begin position="46"/>
        <end position="85"/>
    </location>
</feature>
<feature type="region of interest" description="Disordered" evidence="1">
    <location>
        <begin position="366"/>
        <end position="386"/>
    </location>
</feature>
<feature type="compositionally biased region" description="Polar residues" evidence="1">
    <location>
        <begin position="15"/>
        <end position="28"/>
    </location>
</feature>
<protein>
    <recommendedName>
        <fullName>Meiotic chromosome segregation protein C1539.02</fullName>
    </recommendedName>
</protein>
<comment type="function">
    <text evidence="2">Required for meiotic chromosome segregation.</text>
</comment>
<comment type="subcellular location">
    <subcellularLocation>
        <location evidence="3">Nucleus</location>
    </subcellularLocation>
</comment>